<gene>
    <name type="primary">wnt6</name>
</gene>
<evidence type="ECO:0000250" key="1">
    <source>
        <dbReference type="UniProtKB" id="P27467"/>
    </source>
</evidence>
<evidence type="ECO:0000250" key="2">
    <source>
        <dbReference type="UniProtKB" id="P28026"/>
    </source>
</evidence>
<evidence type="ECO:0000250" key="3">
    <source>
        <dbReference type="UniProtKB" id="P56704"/>
    </source>
</evidence>
<evidence type="ECO:0000255" key="4"/>
<evidence type="ECO:0000305" key="5"/>
<comment type="function">
    <text>Ligand for members of the frizzled family of seven transmembrane receptors. Probable developmental protein. May be a signaling molecule which affects the development of discrete regions of tissues. Is likely to signal over only few cell diameters.</text>
</comment>
<comment type="subcellular location">
    <subcellularLocation>
        <location>Secreted</location>
        <location>Extracellular space</location>
        <location>Extracellular matrix</location>
    </subcellularLocation>
</comment>
<comment type="tissue specificity">
    <text>At tailbud: dorsal, punctate; in adult: brain and heart.</text>
</comment>
<comment type="developmental stage">
    <text>Gastrula onwards.</text>
</comment>
<comment type="PTM">
    <text evidence="1 3">Palmitoleoylation is required for efficient binding to frizzled receptors. Depalmitoleoylation leads to Wnt signaling pathway inhibition.</text>
</comment>
<comment type="similarity">
    <text evidence="5">Belongs to the Wnt family.</text>
</comment>
<accession>P31287</accession>
<reference key="1">
    <citation type="journal article" date="1992" name="Oncogene">
        <title>Cloning and developmental expression in Xenopus laevis of seven additional members of the Wnt family.</title>
        <authorList>
            <person name="Wolda S.L."/>
            <person name="Moon R.T."/>
        </authorList>
    </citation>
    <scope>NUCLEOTIDE SEQUENCE [MRNA]</scope>
</reference>
<sequence length="129" mass="14260">QECKCHGLSGSCTFTTCWKKMPHFREVGDRLLERFNGAFKVMGGNDGKTIIPVGHNIKPPDKQDLIYSAESPDFCQANRKTGSPGTRGRVCNSTALDVGGCDLLCCGRGQREETVVVEENCLCRFHWCC</sequence>
<keyword id="KW-0217">Developmental protein</keyword>
<keyword id="KW-1015">Disulfide bond</keyword>
<keyword id="KW-0272">Extracellular matrix</keyword>
<keyword id="KW-0325">Glycoprotein</keyword>
<keyword id="KW-0449">Lipoprotein</keyword>
<keyword id="KW-1185">Reference proteome</keyword>
<keyword id="KW-0964">Secreted</keyword>
<keyword id="KW-0879">Wnt signaling pathway</keyword>
<protein>
    <recommendedName>
        <fullName>Protein Wnt-6</fullName>
        <shortName>XWnt-6</shortName>
    </recommendedName>
</protein>
<proteinExistence type="evidence at transcript level"/>
<dbReference type="EMBL" id="L07532">
    <property type="protein sequence ID" value="AAA49985.1"/>
    <property type="molecule type" value="mRNA"/>
</dbReference>
<dbReference type="PIR" id="I51574">
    <property type="entry name" value="I51574"/>
</dbReference>
<dbReference type="SMR" id="P31287"/>
<dbReference type="GlyCosmos" id="P31287">
    <property type="glycosylation" value="1 site, No reported glycans"/>
</dbReference>
<dbReference type="AGR" id="Xenbase:XB-GENE-865575"/>
<dbReference type="Xenbase" id="XB-GENE-865575">
    <property type="gene designation" value="wnt6.S"/>
</dbReference>
<dbReference type="Proteomes" id="UP000186698">
    <property type="component" value="Unplaced"/>
</dbReference>
<dbReference type="GO" id="GO:0005615">
    <property type="term" value="C:extracellular space"/>
    <property type="evidence" value="ECO:0000318"/>
    <property type="project" value="GO_Central"/>
</dbReference>
<dbReference type="GO" id="GO:0005125">
    <property type="term" value="F:cytokine activity"/>
    <property type="evidence" value="ECO:0000318"/>
    <property type="project" value="GO_Central"/>
</dbReference>
<dbReference type="GO" id="GO:0005109">
    <property type="term" value="F:frizzled binding"/>
    <property type="evidence" value="ECO:0000318"/>
    <property type="project" value="GO_Central"/>
</dbReference>
<dbReference type="GO" id="GO:0016015">
    <property type="term" value="F:morphogen activity"/>
    <property type="evidence" value="ECO:0000315"/>
    <property type="project" value="BHF-UCL"/>
</dbReference>
<dbReference type="GO" id="GO:0060070">
    <property type="term" value="P:canonical Wnt signaling pathway"/>
    <property type="evidence" value="ECO:0000315"/>
    <property type="project" value="BHF-UCL"/>
</dbReference>
<dbReference type="GO" id="GO:0048738">
    <property type="term" value="P:cardiac muscle tissue development"/>
    <property type="evidence" value="ECO:0000315"/>
    <property type="project" value="BHF-UCL"/>
</dbReference>
<dbReference type="GO" id="GO:0045165">
    <property type="term" value="P:cell fate commitment"/>
    <property type="evidence" value="ECO:0000318"/>
    <property type="project" value="GO_Central"/>
</dbReference>
<dbReference type="GO" id="GO:0031076">
    <property type="term" value="P:embryonic camera-type eye development"/>
    <property type="evidence" value="ECO:0000315"/>
    <property type="project" value="BHF-UCL"/>
</dbReference>
<dbReference type="GO" id="GO:0048566">
    <property type="term" value="P:embryonic digestive tract development"/>
    <property type="evidence" value="ECO:0000315"/>
    <property type="project" value="BHF-UCL"/>
</dbReference>
<dbReference type="GO" id="GO:0001947">
    <property type="term" value="P:heart looping"/>
    <property type="evidence" value="ECO:0000315"/>
    <property type="project" value="BHF-UCL"/>
</dbReference>
<dbReference type="GO" id="GO:0030182">
    <property type="term" value="P:neuron differentiation"/>
    <property type="evidence" value="ECO:0000318"/>
    <property type="project" value="GO_Central"/>
</dbReference>
<dbReference type="Gene3D" id="3.30.2460.20">
    <property type="match status" value="1"/>
</dbReference>
<dbReference type="InterPro" id="IPR005817">
    <property type="entry name" value="Wnt"/>
</dbReference>
<dbReference type="InterPro" id="IPR043158">
    <property type="entry name" value="Wnt_C"/>
</dbReference>
<dbReference type="InterPro" id="IPR018161">
    <property type="entry name" value="Wnt_CS"/>
</dbReference>
<dbReference type="PANTHER" id="PTHR12027:SF72">
    <property type="entry name" value="PROTEIN WNT-6"/>
    <property type="match status" value="1"/>
</dbReference>
<dbReference type="PANTHER" id="PTHR12027">
    <property type="entry name" value="WNT RELATED"/>
    <property type="match status" value="1"/>
</dbReference>
<dbReference type="Pfam" id="PF00110">
    <property type="entry name" value="wnt"/>
    <property type="match status" value="1"/>
</dbReference>
<dbReference type="PRINTS" id="PR01349">
    <property type="entry name" value="WNTPROTEIN"/>
</dbReference>
<dbReference type="SMART" id="SM00097">
    <property type="entry name" value="WNT1"/>
    <property type="match status" value="1"/>
</dbReference>
<dbReference type="PROSITE" id="PS00246">
    <property type="entry name" value="WNT1"/>
    <property type="match status" value="1"/>
</dbReference>
<name>WNT6_XENLA</name>
<feature type="chain" id="PRO_0000200642" description="Protein Wnt-6">
    <location>
        <begin position="1" status="less than"/>
        <end position="129" status="greater than"/>
    </location>
</feature>
<feature type="lipid moiety-binding region" description="O-palmitoleoyl serine; by PORCN" evidence="3">
    <location>
        <position position="9"/>
    </location>
</feature>
<feature type="glycosylation site" description="N-linked (GlcNAc...) asparagine" evidence="4">
    <location>
        <position position="92"/>
    </location>
</feature>
<feature type="disulfide bond" evidence="2">
    <location>
        <begin position="3"/>
        <end position="17"/>
    </location>
</feature>
<feature type="disulfide bond" evidence="2">
    <location>
        <begin position="5"/>
        <end position="12"/>
    </location>
</feature>
<feature type="disulfide bond" evidence="2">
    <location>
        <begin position="75"/>
        <end position="106"/>
    </location>
</feature>
<feature type="disulfide bond" evidence="2">
    <location>
        <begin position="91"/>
        <end position="101"/>
    </location>
</feature>
<feature type="disulfide bond" evidence="2">
    <location>
        <begin position="128"/>
        <end position="129"/>
    </location>
</feature>
<feature type="non-terminal residue">
    <location>
        <position position="1"/>
    </location>
</feature>
<feature type="non-terminal residue">
    <location>
        <position position="129"/>
    </location>
</feature>
<organism>
    <name type="scientific">Xenopus laevis</name>
    <name type="common">African clawed frog</name>
    <dbReference type="NCBI Taxonomy" id="8355"/>
    <lineage>
        <taxon>Eukaryota</taxon>
        <taxon>Metazoa</taxon>
        <taxon>Chordata</taxon>
        <taxon>Craniata</taxon>
        <taxon>Vertebrata</taxon>
        <taxon>Euteleostomi</taxon>
        <taxon>Amphibia</taxon>
        <taxon>Batrachia</taxon>
        <taxon>Anura</taxon>
        <taxon>Pipoidea</taxon>
        <taxon>Pipidae</taxon>
        <taxon>Xenopodinae</taxon>
        <taxon>Xenopus</taxon>
        <taxon>Xenopus</taxon>
    </lineage>
</organism>